<reference key="1">
    <citation type="journal article" date="1995" name="Eur. J. Biochem.">
        <title>Characterization of a 45-kDa flavoprotein and evidence for a rubredoxin, two proteins that could participate in electron transport from H2 to CO2 in methanogenesis in Methanobacterium thermoautotrophicum.</title>
        <authorList>
            <person name="Noelling J."/>
            <person name="Ishii M."/>
            <person name="Koch J."/>
            <person name="Pihl T.D."/>
            <person name="Reeve J.N."/>
            <person name="Thauer R.K."/>
            <person name="Hedderich R."/>
        </authorList>
    </citation>
    <scope>NUCLEOTIDE SEQUENCE [GENOMIC DNA]</scope>
    <source>
        <strain>ATCC 29096 / DSM 1053 / JCM 10044 / NBRC 100330 / Delta H</strain>
    </source>
</reference>
<reference key="2">
    <citation type="journal article" date="1997" name="J. Bacteriol.">
        <title>Complete genome sequence of Methanobacterium thermoautotrophicum deltaH: functional analysis and comparative genomics.</title>
        <authorList>
            <person name="Smith D.R."/>
            <person name="Doucette-Stamm L.A."/>
            <person name="Deloughery C."/>
            <person name="Lee H.-M."/>
            <person name="Dubois J."/>
            <person name="Aldredge T."/>
            <person name="Bashirzadeh R."/>
            <person name="Blakely D."/>
            <person name="Cook R."/>
            <person name="Gilbert K."/>
            <person name="Harrison D."/>
            <person name="Hoang L."/>
            <person name="Keagle P."/>
            <person name="Lumm W."/>
            <person name="Pothier B."/>
            <person name="Qiu D."/>
            <person name="Spadafora R."/>
            <person name="Vicare R."/>
            <person name="Wang Y."/>
            <person name="Wierzbowski J."/>
            <person name="Gibson R."/>
            <person name="Jiwani N."/>
            <person name="Caruso A."/>
            <person name="Bush D."/>
            <person name="Safer H."/>
            <person name="Patwell D."/>
            <person name="Prabhakar S."/>
            <person name="McDougall S."/>
            <person name="Shimer G."/>
            <person name="Goyal A."/>
            <person name="Pietrovski S."/>
            <person name="Church G.M."/>
            <person name="Daniels C.J."/>
            <person name="Mao J.-I."/>
            <person name="Rice P."/>
            <person name="Noelling J."/>
            <person name="Reeve J.N."/>
        </authorList>
    </citation>
    <scope>NUCLEOTIDE SEQUENCE [LARGE SCALE GENOMIC DNA]</scope>
    <source>
        <strain>ATCC 29096 / DSM 1053 / JCM 10044 / NBRC 100330 / Delta H</strain>
    </source>
</reference>
<dbReference type="EMBL" id="U21086">
    <property type="protein sequence ID" value="AAB53661.1"/>
    <property type="molecule type" value="Genomic_DNA"/>
</dbReference>
<dbReference type="EMBL" id="AE000666">
    <property type="protein sequence ID" value="AAB85829.1"/>
    <property type="molecule type" value="Genomic_DNA"/>
</dbReference>
<dbReference type="PIR" id="G69046">
    <property type="entry name" value="G69046"/>
</dbReference>
<dbReference type="RefSeq" id="WP_010876964.1">
    <property type="nucleotide sequence ID" value="NC_000916.1"/>
</dbReference>
<dbReference type="SMR" id="Q50533"/>
<dbReference type="STRING" id="187420.MTH_1352"/>
<dbReference type="PaxDb" id="187420-MTH_1352"/>
<dbReference type="EnsemblBacteria" id="AAB85829">
    <property type="protein sequence ID" value="AAB85829"/>
    <property type="gene ID" value="MTH_1352"/>
</dbReference>
<dbReference type="GeneID" id="1471069"/>
<dbReference type="KEGG" id="mth:MTH_1352"/>
<dbReference type="HOGENOM" id="CLU_1514647_0_0_2"/>
<dbReference type="InParanoid" id="Q50533"/>
<dbReference type="Proteomes" id="UP000005223">
    <property type="component" value="Chromosome"/>
</dbReference>
<dbReference type="GO" id="GO:0005506">
    <property type="term" value="F:iron ion binding"/>
    <property type="evidence" value="ECO:0007669"/>
    <property type="project" value="InterPro"/>
</dbReference>
<dbReference type="Gene3D" id="2.20.28.10">
    <property type="match status" value="1"/>
</dbReference>
<dbReference type="InterPro" id="IPR024934">
    <property type="entry name" value="Rubredoxin-like_dom"/>
</dbReference>
<dbReference type="InterPro" id="IPR018527">
    <property type="entry name" value="Rubredoxin_Fe_BS"/>
</dbReference>
<dbReference type="SUPFAM" id="SSF57802">
    <property type="entry name" value="Rubredoxin-like"/>
    <property type="match status" value="1"/>
</dbReference>
<dbReference type="PROSITE" id="PS00202">
    <property type="entry name" value="RUBREDOXIN"/>
    <property type="match status" value="1"/>
</dbReference>
<dbReference type="PROSITE" id="PS50903">
    <property type="entry name" value="RUBREDOXIN_LIKE"/>
    <property type="match status" value="1"/>
</dbReference>
<name>RUBH_METTH</name>
<proteinExistence type="inferred from homology"/>
<gene>
    <name type="primary">rdxA</name>
    <name type="ordered locus">MTH_1352</name>
</gene>
<feature type="chain" id="PRO_0000135061" description="Putative rubredoxin">
    <location>
        <begin position="1"/>
        <end position="177"/>
    </location>
</feature>
<feature type="domain" description="Rubredoxin-like" evidence="2">
    <location>
        <begin position="1"/>
        <end position="38"/>
    </location>
</feature>
<feature type="binding site" evidence="2">
    <location>
        <position position="4"/>
    </location>
    <ligand>
        <name>Fe cation</name>
        <dbReference type="ChEBI" id="CHEBI:24875"/>
    </ligand>
</feature>
<feature type="binding site" evidence="2">
    <location>
        <position position="7"/>
    </location>
    <ligand>
        <name>Fe cation</name>
        <dbReference type="ChEBI" id="CHEBI:24875"/>
    </ligand>
</feature>
<feature type="binding site" evidence="2">
    <location>
        <position position="25"/>
    </location>
    <ligand>
        <name>Fe cation</name>
        <dbReference type="ChEBI" id="CHEBI:24875"/>
    </ligand>
</feature>
<feature type="binding site" evidence="2">
    <location>
        <position position="28"/>
    </location>
    <ligand>
        <name>Fe cation</name>
        <dbReference type="ChEBI" id="CHEBI:24875"/>
    </ligand>
</feature>
<evidence type="ECO:0000250" key="1"/>
<evidence type="ECO:0000255" key="2">
    <source>
        <dbReference type="PROSITE-ProRule" id="PRU00241"/>
    </source>
</evidence>
<evidence type="ECO:0000305" key="3"/>
<protein>
    <recommendedName>
        <fullName>Putative rubredoxin</fullName>
    </recommendedName>
</protein>
<keyword id="KW-0249">Electron transport</keyword>
<keyword id="KW-0408">Iron</keyword>
<keyword id="KW-0479">Metal-binding</keyword>
<keyword id="KW-1185">Reference proteome</keyword>
<keyword id="KW-0813">Transport</keyword>
<comment type="cofactor">
    <cofactor evidence="1">
        <name>Fe(3+)</name>
        <dbReference type="ChEBI" id="CHEBI:29034"/>
    </cofactor>
    <text evidence="1">Binds 1 Fe(3+) ion per subunit.</text>
</comment>
<comment type="similarity">
    <text evidence="3">Belongs to the rubredoxin family.</text>
</comment>
<organism>
    <name type="scientific">Methanothermobacter thermautotrophicus (strain ATCC 29096 / DSM 1053 / JCM 10044 / NBRC 100330 / Delta H)</name>
    <name type="common">Methanobacterium thermoautotrophicum</name>
    <dbReference type="NCBI Taxonomy" id="187420"/>
    <lineage>
        <taxon>Archaea</taxon>
        <taxon>Methanobacteriati</taxon>
        <taxon>Methanobacteriota</taxon>
        <taxon>Methanomada group</taxon>
        <taxon>Methanobacteria</taxon>
        <taxon>Methanobacteriales</taxon>
        <taxon>Methanobacteriaceae</taxon>
        <taxon>Methanothermobacter</taxon>
    </lineage>
</organism>
<sequence length="177" mass="19592">MKICRICGYQIPEGEFNLLEDGWVCPRCGVGKEELQDSAEPLGGRDPLMLIFRAMTVGLWRVLGNGSQGVTREMGSVIADNIRHGDDPLKSAADYFIEHGFAASISTDTENFALNVKNCSFYGFCCSLEEDGVLLSTCPYANTAAAVLERTTGYRYRIKRNKGDHGHIIEFSRISKK</sequence>
<accession>Q50533</accession>